<reference key="1">
    <citation type="journal article" date="2005" name="Science">
        <title>The transcriptional landscape of the mammalian genome.</title>
        <authorList>
            <person name="Carninci P."/>
            <person name="Kasukawa T."/>
            <person name="Katayama S."/>
            <person name="Gough J."/>
            <person name="Frith M.C."/>
            <person name="Maeda N."/>
            <person name="Oyama R."/>
            <person name="Ravasi T."/>
            <person name="Lenhard B."/>
            <person name="Wells C."/>
            <person name="Kodzius R."/>
            <person name="Shimokawa K."/>
            <person name="Bajic V.B."/>
            <person name="Brenner S.E."/>
            <person name="Batalov S."/>
            <person name="Forrest A.R."/>
            <person name="Zavolan M."/>
            <person name="Davis M.J."/>
            <person name="Wilming L.G."/>
            <person name="Aidinis V."/>
            <person name="Allen J.E."/>
            <person name="Ambesi-Impiombato A."/>
            <person name="Apweiler R."/>
            <person name="Aturaliya R.N."/>
            <person name="Bailey T.L."/>
            <person name="Bansal M."/>
            <person name="Baxter L."/>
            <person name="Beisel K.W."/>
            <person name="Bersano T."/>
            <person name="Bono H."/>
            <person name="Chalk A.M."/>
            <person name="Chiu K.P."/>
            <person name="Choudhary V."/>
            <person name="Christoffels A."/>
            <person name="Clutterbuck D.R."/>
            <person name="Crowe M.L."/>
            <person name="Dalla E."/>
            <person name="Dalrymple B.P."/>
            <person name="de Bono B."/>
            <person name="Della Gatta G."/>
            <person name="di Bernardo D."/>
            <person name="Down T."/>
            <person name="Engstrom P."/>
            <person name="Fagiolini M."/>
            <person name="Faulkner G."/>
            <person name="Fletcher C.F."/>
            <person name="Fukushima T."/>
            <person name="Furuno M."/>
            <person name="Futaki S."/>
            <person name="Gariboldi M."/>
            <person name="Georgii-Hemming P."/>
            <person name="Gingeras T.R."/>
            <person name="Gojobori T."/>
            <person name="Green R.E."/>
            <person name="Gustincich S."/>
            <person name="Harbers M."/>
            <person name="Hayashi Y."/>
            <person name="Hensch T.K."/>
            <person name="Hirokawa N."/>
            <person name="Hill D."/>
            <person name="Huminiecki L."/>
            <person name="Iacono M."/>
            <person name="Ikeo K."/>
            <person name="Iwama A."/>
            <person name="Ishikawa T."/>
            <person name="Jakt M."/>
            <person name="Kanapin A."/>
            <person name="Katoh M."/>
            <person name="Kawasawa Y."/>
            <person name="Kelso J."/>
            <person name="Kitamura H."/>
            <person name="Kitano H."/>
            <person name="Kollias G."/>
            <person name="Krishnan S.P."/>
            <person name="Kruger A."/>
            <person name="Kummerfeld S.K."/>
            <person name="Kurochkin I.V."/>
            <person name="Lareau L.F."/>
            <person name="Lazarevic D."/>
            <person name="Lipovich L."/>
            <person name="Liu J."/>
            <person name="Liuni S."/>
            <person name="McWilliam S."/>
            <person name="Madan Babu M."/>
            <person name="Madera M."/>
            <person name="Marchionni L."/>
            <person name="Matsuda H."/>
            <person name="Matsuzawa S."/>
            <person name="Miki H."/>
            <person name="Mignone F."/>
            <person name="Miyake S."/>
            <person name="Morris K."/>
            <person name="Mottagui-Tabar S."/>
            <person name="Mulder N."/>
            <person name="Nakano N."/>
            <person name="Nakauchi H."/>
            <person name="Ng P."/>
            <person name="Nilsson R."/>
            <person name="Nishiguchi S."/>
            <person name="Nishikawa S."/>
            <person name="Nori F."/>
            <person name="Ohara O."/>
            <person name="Okazaki Y."/>
            <person name="Orlando V."/>
            <person name="Pang K.C."/>
            <person name="Pavan W.J."/>
            <person name="Pavesi G."/>
            <person name="Pesole G."/>
            <person name="Petrovsky N."/>
            <person name="Piazza S."/>
            <person name="Reed J."/>
            <person name="Reid J.F."/>
            <person name="Ring B.Z."/>
            <person name="Ringwald M."/>
            <person name="Rost B."/>
            <person name="Ruan Y."/>
            <person name="Salzberg S.L."/>
            <person name="Sandelin A."/>
            <person name="Schneider C."/>
            <person name="Schoenbach C."/>
            <person name="Sekiguchi K."/>
            <person name="Semple C.A."/>
            <person name="Seno S."/>
            <person name="Sessa L."/>
            <person name="Sheng Y."/>
            <person name="Shibata Y."/>
            <person name="Shimada H."/>
            <person name="Shimada K."/>
            <person name="Silva D."/>
            <person name="Sinclair B."/>
            <person name="Sperling S."/>
            <person name="Stupka E."/>
            <person name="Sugiura K."/>
            <person name="Sultana R."/>
            <person name="Takenaka Y."/>
            <person name="Taki K."/>
            <person name="Tammoja K."/>
            <person name="Tan S.L."/>
            <person name="Tang S."/>
            <person name="Taylor M.S."/>
            <person name="Tegner J."/>
            <person name="Teichmann S.A."/>
            <person name="Ueda H.R."/>
            <person name="van Nimwegen E."/>
            <person name="Verardo R."/>
            <person name="Wei C.L."/>
            <person name="Yagi K."/>
            <person name="Yamanishi H."/>
            <person name="Zabarovsky E."/>
            <person name="Zhu S."/>
            <person name="Zimmer A."/>
            <person name="Hide W."/>
            <person name="Bult C."/>
            <person name="Grimmond S.M."/>
            <person name="Teasdale R.D."/>
            <person name="Liu E.T."/>
            <person name="Brusic V."/>
            <person name="Quackenbush J."/>
            <person name="Wahlestedt C."/>
            <person name="Mattick J.S."/>
            <person name="Hume D.A."/>
            <person name="Kai C."/>
            <person name="Sasaki D."/>
            <person name="Tomaru Y."/>
            <person name="Fukuda S."/>
            <person name="Kanamori-Katayama M."/>
            <person name="Suzuki M."/>
            <person name="Aoki J."/>
            <person name="Arakawa T."/>
            <person name="Iida J."/>
            <person name="Imamura K."/>
            <person name="Itoh M."/>
            <person name="Kato T."/>
            <person name="Kawaji H."/>
            <person name="Kawagashira N."/>
            <person name="Kawashima T."/>
            <person name="Kojima M."/>
            <person name="Kondo S."/>
            <person name="Konno H."/>
            <person name="Nakano K."/>
            <person name="Ninomiya N."/>
            <person name="Nishio T."/>
            <person name="Okada M."/>
            <person name="Plessy C."/>
            <person name="Shibata K."/>
            <person name="Shiraki T."/>
            <person name="Suzuki S."/>
            <person name="Tagami M."/>
            <person name="Waki K."/>
            <person name="Watahiki A."/>
            <person name="Okamura-Oho Y."/>
            <person name="Suzuki H."/>
            <person name="Kawai J."/>
            <person name="Hayashizaki Y."/>
        </authorList>
    </citation>
    <scope>NUCLEOTIDE SEQUENCE [LARGE SCALE MRNA] (ISOFORMS 1 AND 2)</scope>
    <source>
        <strain>C57BL/6J</strain>
        <tissue>Corpora quadrigemina</tissue>
        <tissue>Diencephalon</tissue>
    </source>
</reference>
<reference key="2">
    <citation type="journal article" date="2004" name="Genome Res.">
        <title>The status, quality, and expansion of the NIH full-length cDNA project: the Mammalian Gene Collection (MGC).</title>
        <authorList>
            <consortium name="The MGC Project Team"/>
        </authorList>
    </citation>
    <scope>NUCLEOTIDE SEQUENCE [LARGE SCALE MRNA] (ISOFORM 1)</scope>
    <source>
        <tissue>Brain</tissue>
    </source>
</reference>
<reference key="3">
    <citation type="journal article" date="2010" name="Cell">
        <title>A tissue-specific atlas of mouse protein phosphorylation and expression.</title>
        <authorList>
            <person name="Huttlin E.L."/>
            <person name="Jedrychowski M.P."/>
            <person name="Elias J.E."/>
            <person name="Goswami T."/>
            <person name="Rad R."/>
            <person name="Beausoleil S.A."/>
            <person name="Villen J."/>
            <person name="Haas W."/>
            <person name="Sowa M.E."/>
            <person name="Gygi S.P."/>
        </authorList>
    </citation>
    <scope>IDENTIFICATION BY MASS SPECTROMETRY [LARGE SCALE ANALYSIS]</scope>
    <source>
        <tissue>Brain</tissue>
    </source>
</reference>
<reference key="4">
    <citation type="journal article" date="2014" name="Mol. Cell. Proteomics">
        <title>Immunoaffinity enrichment and mass spectrometry analysis of protein methylation.</title>
        <authorList>
            <person name="Guo A."/>
            <person name="Gu H."/>
            <person name="Zhou J."/>
            <person name="Mulhern D."/>
            <person name="Wang Y."/>
            <person name="Lee K.A."/>
            <person name="Yang V."/>
            <person name="Aguiar M."/>
            <person name="Kornhauser J."/>
            <person name="Jia X."/>
            <person name="Ren J."/>
            <person name="Beausoleil S.A."/>
            <person name="Silva J.C."/>
            <person name="Vemulapalli V."/>
            <person name="Bedford M.T."/>
            <person name="Comb M.J."/>
        </authorList>
    </citation>
    <scope>METHYLATION [LARGE SCALE ANALYSIS] AT ARG-310 AND ARG-320</scope>
    <scope>IDENTIFICATION BY MASS SPECTROMETRY [LARGE SCALE ANALYSIS]</scope>
    <source>
        <tissue>Brain</tissue>
    </source>
</reference>
<keyword id="KW-0025">Alternative splicing</keyword>
<keyword id="KW-0131">Cell cycle</keyword>
<keyword id="KW-0132">Cell division</keyword>
<keyword id="KW-0175">Coiled coil</keyword>
<keyword id="KW-0963">Cytoplasm</keyword>
<keyword id="KW-0206">Cytoskeleton</keyword>
<keyword id="KW-0488">Methylation</keyword>
<keyword id="KW-0493">Microtubule</keyword>
<keyword id="KW-0498">Mitosis</keyword>
<keyword id="KW-0539">Nucleus</keyword>
<keyword id="KW-1185">Reference proteome</keyword>
<protein>
    <recommendedName>
        <fullName>Fibronectin type III and SPRY domain-containing protein 1</fullName>
    </recommendedName>
</protein>
<organism>
    <name type="scientific">Mus musculus</name>
    <name type="common">Mouse</name>
    <dbReference type="NCBI Taxonomy" id="10090"/>
    <lineage>
        <taxon>Eukaryota</taxon>
        <taxon>Metazoa</taxon>
        <taxon>Chordata</taxon>
        <taxon>Craniata</taxon>
        <taxon>Vertebrata</taxon>
        <taxon>Euteleostomi</taxon>
        <taxon>Mammalia</taxon>
        <taxon>Eutheria</taxon>
        <taxon>Euarchontoglires</taxon>
        <taxon>Glires</taxon>
        <taxon>Rodentia</taxon>
        <taxon>Myomorpha</taxon>
        <taxon>Muroidea</taxon>
        <taxon>Muridae</taxon>
        <taxon>Murinae</taxon>
        <taxon>Mus</taxon>
        <taxon>Mus</taxon>
    </lineage>
</organism>
<sequence length="496" mass="55525">MEDQREALRKIITTLAMKNEETQTFIYSLKQMLLNVEANSAKVQEDLEAEFQSLTSVLEELKESMLMKIKQDRASRTYELQNQLAACTRALESSEELLETANQTLQASDSEDFSQAAKEIKDGITMAPAFRLSLKAKVSDNMSHLMVDFAQERQMLQALKFLPVPSAPTIDLAESLVSDNCVTLVWHMPDEDSKIDHYVLEYRKTNFEGPPRLKEDHPWMVVEGIRQTEHTLTGLKFDMKYMNIRVKACNKAVAGEFSEPVTLETPAFMFRLDGSTSHQNLRVEDLSAEWDAMGGKVQDIKAREKEGKGRTASPVNSPARGTPSPKRMSSGRGGRDRFTAESYTVLGDTLIDGGEHYWEVRFEPDSKAFGLGVAYRSLGRFEQLGKTAASWCLHANNWLQASFTAKHANKVKVLDSPVPDCLGVHCDFHQGLLSFYNARTKQLLHTFKAKFTQPLLPAFTVWCGSFQVTTGLQVPSAVRCLQKRGSATSSSNTSLT</sequence>
<feature type="chain" id="PRO_0000316539" description="Fibronectin type III and SPRY domain-containing protein 1">
    <location>
        <begin position="1"/>
        <end position="496"/>
    </location>
</feature>
<feature type="domain" description="COS" evidence="5">
    <location>
        <begin position="105"/>
        <end position="162"/>
    </location>
</feature>
<feature type="domain" description="Fibronectin type-III" evidence="3">
    <location>
        <begin position="164"/>
        <end position="268"/>
    </location>
</feature>
<feature type="domain" description="B30.2/SPRY" evidence="4">
    <location>
        <begin position="290"/>
        <end position="477"/>
    </location>
</feature>
<feature type="region of interest" description="Disordered" evidence="6">
    <location>
        <begin position="301"/>
        <end position="336"/>
    </location>
</feature>
<feature type="coiled-coil region" evidence="2">
    <location>
        <begin position="4"/>
        <end position="99"/>
    </location>
</feature>
<feature type="modified residue" description="Omega-N-methylarginine" evidence="8">
    <location>
        <position position="310"/>
    </location>
</feature>
<feature type="modified residue" description="Omega-N-methylarginine" evidence="8">
    <location>
        <position position="320"/>
    </location>
</feature>
<feature type="splice variant" id="VSP_030767" description="In isoform 2." evidence="7">
    <location>
        <begin position="81"/>
        <end position="97"/>
    </location>
</feature>
<dbReference type="EMBL" id="AK140132">
    <property type="protein sequence ID" value="BAE24249.1"/>
    <property type="molecule type" value="mRNA"/>
</dbReference>
<dbReference type="EMBL" id="AK144257">
    <property type="protein sequence ID" value="BAE25801.1"/>
    <property type="molecule type" value="mRNA"/>
</dbReference>
<dbReference type="EMBL" id="BC055106">
    <property type="protein sequence ID" value="AAH55106.1"/>
    <property type="molecule type" value="mRNA"/>
</dbReference>
<dbReference type="CCDS" id="CCDS37661.1">
    <molecule id="Q7TPM6-1"/>
</dbReference>
<dbReference type="RefSeq" id="NP_899001.1">
    <molecule id="Q7TPM6-1"/>
    <property type="nucleotide sequence ID" value="NM_183178.3"/>
</dbReference>
<dbReference type="BioGRID" id="232171">
    <property type="interactions" value="1"/>
</dbReference>
<dbReference type="FunCoup" id="Q7TPM6">
    <property type="interactions" value="243"/>
</dbReference>
<dbReference type="IntAct" id="Q7TPM6">
    <property type="interactions" value="1"/>
</dbReference>
<dbReference type="MINT" id="Q7TPM6"/>
<dbReference type="STRING" id="10090.ENSMUSP00000011733"/>
<dbReference type="GlyGen" id="Q7TPM6">
    <property type="glycosylation" value="1 site"/>
</dbReference>
<dbReference type="iPTMnet" id="Q7TPM6"/>
<dbReference type="PhosphoSitePlus" id="Q7TPM6"/>
<dbReference type="SwissPalm" id="Q7TPM6"/>
<dbReference type="PaxDb" id="10090-ENSMUSP00000011733"/>
<dbReference type="PeptideAtlas" id="Q7TPM6"/>
<dbReference type="ProteomicsDB" id="271640">
    <molecule id="Q7TPM6-1"/>
</dbReference>
<dbReference type="ProteomicsDB" id="271641">
    <molecule id="Q7TPM6-2"/>
</dbReference>
<dbReference type="Antibodypedia" id="23560">
    <property type="antibodies" value="192 antibodies from 24 providers"/>
</dbReference>
<dbReference type="DNASU" id="240121"/>
<dbReference type="Ensembl" id="ENSMUST00000011733.9">
    <molecule id="Q7TPM6-1"/>
    <property type="protein sequence ID" value="ENSMUSP00000011733.9"/>
    <property type="gene ID" value="ENSMUSG00000011589.10"/>
</dbReference>
<dbReference type="GeneID" id="240121"/>
<dbReference type="KEGG" id="mmu:240121"/>
<dbReference type="UCSC" id="uc008dan.1">
    <molecule id="Q7TPM6-1"/>
    <property type="organism name" value="mouse"/>
</dbReference>
<dbReference type="AGR" id="MGI:1934858"/>
<dbReference type="CTD" id="79187"/>
<dbReference type="MGI" id="MGI:1934858">
    <property type="gene designation" value="Fsd1"/>
</dbReference>
<dbReference type="VEuPathDB" id="HostDB:ENSMUSG00000011589"/>
<dbReference type="eggNOG" id="KOG2177">
    <property type="taxonomic scope" value="Eukaryota"/>
</dbReference>
<dbReference type="GeneTree" id="ENSGT00940000159440"/>
<dbReference type="HOGENOM" id="CLU_013137_19_1_1"/>
<dbReference type="InParanoid" id="Q7TPM6"/>
<dbReference type="OMA" id="PARCAQS"/>
<dbReference type="OrthoDB" id="9927450at2759"/>
<dbReference type="PhylomeDB" id="Q7TPM6"/>
<dbReference type="TreeFam" id="TF333654"/>
<dbReference type="BioGRID-ORCS" id="240121">
    <property type="hits" value="1 hit in 79 CRISPR screens"/>
</dbReference>
<dbReference type="CD-CODE" id="CE726F99">
    <property type="entry name" value="Postsynaptic density"/>
</dbReference>
<dbReference type="ChiTaRS" id="Fsd1">
    <property type="organism name" value="mouse"/>
</dbReference>
<dbReference type="PRO" id="PR:Q7TPM6"/>
<dbReference type="Proteomes" id="UP000000589">
    <property type="component" value="Chromosome 17"/>
</dbReference>
<dbReference type="RNAct" id="Q7TPM6">
    <property type="molecule type" value="protein"/>
</dbReference>
<dbReference type="Bgee" id="ENSMUSG00000011589">
    <property type="expression patterns" value="Expressed in embryonic brain and 161 other cell types or tissues"/>
</dbReference>
<dbReference type="GO" id="GO:0005813">
    <property type="term" value="C:centrosome"/>
    <property type="evidence" value="ECO:0007669"/>
    <property type="project" value="UniProtKB-SubCell"/>
</dbReference>
<dbReference type="GO" id="GO:0032154">
    <property type="term" value="C:cleavage furrow"/>
    <property type="evidence" value="ECO:0007669"/>
    <property type="project" value="UniProtKB-SubCell"/>
</dbReference>
<dbReference type="GO" id="GO:0005829">
    <property type="term" value="C:cytosol"/>
    <property type="evidence" value="ECO:0007669"/>
    <property type="project" value="Ensembl"/>
</dbReference>
<dbReference type="GO" id="GO:0005874">
    <property type="term" value="C:microtubule"/>
    <property type="evidence" value="ECO:0007669"/>
    <property type="project" value="UniProtKB-KW"/>
</dbReference>
<dbReference type="GO" id="GO:0005634">
    <property type="term" value="C:nucleus"/>
    <property type="evidence" value="ECO:0007669"/>
    <property type="project" value="UniProtKB-SubCell"/>
</dbReference>
<dbReference type="GO" id="GO:0042802">
    <property type="term" value="F:identical protein binding"/>
    <property type="evidence" value="ECO:0007669"/>
    <property type="project" value="Ensembl"/>
</dbReference>
<dbReference type="GO" id="GO:0008017">
    <property type="term" value="F:microtubule binding"/>
    <property type="evidence" value="ECO:0007669"/>
    <property type="project" value="Ensembl"/>
</dbReference>
<dbReference type="GO" id="GO:0051301">
    <property type="term" value="P:cell division"/>
    <property type="evidence" value="ECO:0007669"/>
    <property type="project" value="UniProtKB-KW"/>
</dbReference>
<dbReference type="GO" id="GO:0031122">
    <property type="term" value="P:cytoplasmic microtubule organization"/>
    <property type="evidence" value="ECO:0007669"/>
    <property type="project" value="Ensembl"/>
</dbReference>
<dbReference type="GO" id="GO:0032465">
    <property type="term" value="P:regulation of cytokinesis"/>
    <property type="evidence" value="ECO:0007669"/>
    <property type="project" value="Ensembl"/>
</dbReference>
<dbReference type="GO" id="GO:0060236">
    <property type="term" value="P:regulation of mitotic spindle organization"/>
    <property type="evidence" value="ECO:0007669"/>
    <property type="project" value="Ensembl"/>
</dbReference>
<dbReference type="CDD" id="cd00063">
    <property type="entry name" value="FN3"/>
    <property type="match status" value="1"/>
</dbReference>
<dbReference type="CDD" id="cd12901">
    <property type="entry name" value="SPRY_PRY_FSD1"/>
    <property type="match status" value="1"/>
</dbReference>
<dbReference type="FunFam" id="2.60.120.920:FF:000034">
    <property type="entry name" value="Fibronectin type III and SPRY domain-containing protein 1"/>
    <property type="match status" value="1"/>
</dbReference>
<dbReference type="Gene3D" id="1.20.5.170">
    <property type="match status" value="1"/>
</dbReference>
<dbReference type="Gene3D" id="2.60.120.920">
    <property type="match status" value="1"/>
</dbReference>
<dbReference type="Gene3D" id="2.60.40.10">
    <property type="entry name" value="Immunoglobulins"/>
    <property type="match status" value="1"/>
</dbReference>
<dbReference type="InterPro" id="IPR001870">
    <property type="entry name" value="B30.2/SPRY"/>
</dbReference>
<dbReference type="InterPro" id="IPR043136">
    <property type="entry name" value="B30.2/SPRY_sf"/>
</dbReference>
<dbReference type="InterPro" id="IPR003649">
    <property type="entry name" value="Bbox_C"/>
</dbReference>
<dbReference type="InterPro" id="IPR013320">
    <property type="entry name" value="ConA-like_dom_sf"/>
</dbReference>
<dbReference type="InterPro" id="IPR017903">
    <property type="entry name" value="COS_domain"/>
</dbReference>
<dbReference type="InterPro" id="IPR050617">
    <property type="entry name" value="E3_ligase_FN3/SPRY"/>
</dbReference>
<dbReference type="InterPro" id="IPR003961">
    <property type="entry name" value="FN3_dom"/>
</dbReference>
<dbReference type="InterPro" id="IPR036116">
    <property type="entry name" value="FN3_sf"/>
</dbReference>
<dbReference type="InterPro" id="IPR013783">
    <property type="entry name" value="Ig-like_fold"/>
</dbReference>
<dbReference type="InterPro" id="IPR035742">
    <property type="entry name" value="SPRY/PRY_FSD1"/>
</dbReference>
<dbReference type="InterPro" id="IPR003877">
    <property type="entry name" value="SPRY_dom"/>
</dbReference>
<dbReference type="PANTHER" id="PTHR24099">
    <property type="entry name" value="E3 UBIQUITIN-PROTEIN LIGASE TRIM36-RELATED"/>
    <property type="match status" value="1"/>
</dbReference>
<dbReference type="PANTHER" id="PTHR24099:SF4">
    <property type="entry name" value="FIBRONECTIN TYPE III AND SPRY DOMAIN-CONTAINING PROTEIN 1"/>
    <property type="match status" value="1"/>
</dbReference>
<dbReference type="Pfam" id="PF00041">
    <property type="entry name" value="fn3"/>
    <property type="match status" value="1"/>
</dbReference>
<dbReference type="Pfam" id="PF00622">
    <property type="entry name" value="SPRY"/>
    <property type="match status" value="1"/>
</dbReference>
<dbReference type="SMART" id="SM00502">
    <property type="entry name" value="BBC"/>
    <property type="match status" value="1"/>
</dbReference>
<dbReference type="SMART" id="SM00060">
    <property type="entry name" value="FN3"/>
    <property type="match status" value="1"/>
</dbReference>
<dbReference type="SMART" id="SM00449">
    <property type="entry name" value="SPRY"/>
    <property type="match status" value="1"/>
</dbReference>
<dbReference type="SUPFAM" id="SSF49899">
    <property type="entry name" value="Concanavalin A-like lectins/glucanases"/>
    <property type="match status" value="1"/>
</dbReference>
<dbReference type="SUPFAM" id="SSF49265">
    <property type="entry name" value="Fibronectin type III"/>
    <property type="match status" value="1"/>
</dbReference>
<dbReference type="PROSITE" id="PS50188">
    <property type="entry name" value="B302_SPRY"/>
    <property type="match status" value="1"/>
</dbReference>
<dbReference type="PROSITE" id="PS51262">
    <property type="entry name" value="COS"/>
    <property type="match status" value="1"/>
</dbReference>
<dbReference type="PROSITE" id="PS50853">
    <property type="entry name" value="FN3"/>
    <property type="match status" value="1"/>
</dbReference>
<evidence type="ECO:0000250" key="1"/>
<evidence type="ECO:0000255" key="2"/>
<evidence type="ECO:0000255" key="3">
    <source>
        <dbReference type="PROSITE-ProRule" id="PRU00316"/>
    </source>
</evidence>
<evidence type="ECO:0000255" key="4">
    <source>
        <dbReference type="PROSITE-ProRule" id="PRU00548"/>
    </source>
</evidence>
<evidence type="ECO:0000255" key="5">
    <source>
        <dbReference type="PROSITE-ProRule" id="PRU00586"/>
    </source>
</evidence>
<evidence type="ECO:0000256" key="6">
    <source>
        <dbReference type="SAM" id="MobiDB-lite"/>
    </source>
</evidence>
<evidence type="ECO:0000303" key="7">
    <source>
    </source>
</evidence>
<evidence type="ECO:0007744" key="8">
    <source>
    </source>
</evidence>
<name>FSD1_MOUSE</name>
<proteinExistence type="evidence at protein level"/>
<comment type="function">
    <text evidence="1">May be involved in microtubule organization and stabilization.</text>
</comment>
<comment type="subunit">
    <text evidence="1">Oligomerization is required for binding to microtubules.</text>
</comment>
<comment type="subcellular location">
    <subcellularLocation>
        <location evidence="1">Cytoplasm</location>
        <location evidence="1">Cytoskeleton</location>
        <location evidence="1">Microtubule organizing center</location>
        <location evidence="1">Centrosome</location>
    </subcellularLocation>
    <subcellularLocation>
        <location evidence="1">Nucleus</location>
    </subcellularLocation>
    <subcellularLocation>
        <location evidence="1">Cytoplasm</location>
    </subcellularLocation>
    <subcellularLocation>
        <location evidence="1">Cleavage furrow</location>
    </subcellularLocation>
    <text evidence="1">Cell-cycle-dependent association with the centrosome. Colocalizes with a subpopulation of microtubules. Does not associate with microtubules during mitosis but reassociates with microtubules during cytokinesis. Localizes to the central portions of a small subset of microtubules in interphase cells and a subpopulation of microtubules in the cleavage furrow, not present in the mitotic spindle (By similarity).</text>
</comment>
<comment type="alternative products">
    <event type="alternative splicing"/>
    <isoform>
        <id>Q7TPM6-1</id>
        <name>1</name>
        <sequence type="displayed"/>
    </isoform>
    <isoform>
        <id>Q7TPM6-2</id>
        <name>2</name>
        <sequence type="described" ref="VSP_030767"/>
    </isoform>
</comment>
<comment type="domain">
    <text>B30.2 box contains a microtubule-binding site.</text>
</comment>
<accession>Q7TPM6</accession>
<accession>Q3UNE6</accession>
<gene>
    <name type="primary">Fsd1</name>
</gene>